<gene>
    <name evidence="1" type="primary">clpS</name>
    <name type="ordered locus">NMA1046</name>
</gene>
<dbReference type="EMBL" id="AL157959">
    <property type="protein sequence ID" value="CAM08263.1"/>
    <property type="molecule type" value="Genomic_DNA"/>
</dbReference>
<dbReference type="PIR" id="F81869">
    <property type="entry name" value="F81869"/>
</dbReference>
<dbReference type="RefSeq" id="WP_010981151.1">
    <property type="nucleotide sequence ID" value="NC_003116.1"/>
</dbReference>
<dbReference type="SMR" id="Q9JV14"/>
<dbReference type="EnsemblBacteria" id="CAM08263">
    <property type="protein sequence ID" value="CAM08263"/>
    <property type="gene ID" value="NMA1046"/>
</dbReference>
<dbReference type="KEGG" id="nma:NMA1046"/>
<dbReference type="HOGENOM" id="CLU_134358_1_0_4"/>
<dbReference type="Proteomes" id="UP000000626">
    <property type="component" value="Chromosome"/>
</dbReference>
<dbReference type="GO" id="GO:0030163">
    <property type="term" value="P:protein catabolic process"/>
    <property type="evidence" value="ECO:0007669"/>
    <property type="project" value="InterPro"/>
</dbReference>
<dbReference type="GO" id="GO:0006508">
    <property type="term" value="P:proteolysis"/>
    <property type="evidence" value="ECO:0007669"/>
    <property type="project" value="UniProtKB-UniRule"/>
</dbReference>
<dbReference type="FunFam" id="3.30.1390.10:FF:000002">
    <property type="entry name" value="ATP-dependent Clp protease adapter protein ClpS"/>
    <property type="match status" value="1"/>
</dbReference>
<dbReference type="Gene3D" id="3.30.1390.10">
    <property type="match status" value="1"/>
</dbReference>
<dbReference type="HAMAP" id="MF_00302">
    <property type="entry name" value="ClpS"/>
    <property type="match status" value="1"/>
</dbReference>
<dbReference type="InterPro" id="IPR022935">
    <property type="entry name" value="ClpS"/>
</dbReference>
<dbReference type="InterPro" id="IPR003769">
    <property type="entry name" value="ClpS_core"/>
</dbReference>
<dbReference type="InterPro" id="IPR014719">
    <property type="entry name" value="Ribosomal_bL12_C/ClpS-like"/>
</dbReference>
<dbReference type="NCBIfam" id="NF000672">
    <property type="entry name" value="PRK00033.1-5"/>
    <property type="match status" value="1"/>
</dbReference>
<dbReference type="PANTHER" id="PTHR33473:SF19">
    <property type="entry name" value="ATP-DEPENDENT CLP PROTEASE ADAPTER PROTEIN CLPS"/>
    <property type="match status" value="1"/>
</dbReference>
<dbReference type="PANTHER" id="PTHR33473">
    <property type="entry name" value="ATP-DEPENDENT CLP PROTEASE ADAPTER PROTEIN CLPS1, CHLOROPLASTIC"/>
    <property type="match status" value="1"/>
</dbReference>
<dbReference type="Pfam" id="PF02617">
    <property type="entry name" value="ClpS"/>
    <property type="match status" value="1"/>
</dbReference>
<dbReference type="SUPFAM" id="SSF54736">
    <property type="entry name" value="ClpS-like"/>
    <property type="match status" value="1"/>
</dbReference>
<name>CLPS_NEIMA</name>
<organism>
    <name type="scientific">Neisseria meningitidis serogroup A / serotype 4A (strain DSM 15465 / Z2491)</name>
    <dbReference type="NCBI Taxonomy" id="122587"/>
    <lineage>
        <taxon>Bacteria</taxon>
        <taxon>Pseudomonadati</taxon>
        <taxon>Pseudomonadota</taxon>
        <taxon>Betaproteobacteria</taxon>
        <taxon>Neisseriales</taxon>
        <taxon>Neisseriaceae</taxon>
        <taxon>Neisseria</taxon>
    </lineage>
</organism>
<accession>Q9JV14</accession>
<accession>A1IR77</accession>
<evidence type="ECO:0000255" key="1">
    <source>
        <dbReference type="HAMAP-Rule" id="MF_00302"/>
    </source>
</evidence>
<sequence length="103" mass="11739">MNHPNTDHQSDTLLSDINTQPPKRYGVFLLNDDYTTMEFVVEILTEVFMLAQEQAVAVMLLVHHEGKGLCGTYTRDIAQTKQHQVMERAKTEGHPLKCIVEEV</sequence>
<proteinExistence type="inferred from homology"/>
<protein>
    <recommendedName>
        <fullName evidence="1">ATP-dependent Clp protease adapter protein ClpS</fullName>
    </recommendedName>
</protein>
<feature type="chain" id="PRO_0000215728" description="ATP-dependent Clp protease adapter protein ClpS">
    <location>
        <begin position="1"/>
        <end position="103"/>
    </location>
</feature>
<comment type="function">
    <text evidence="1">Involved in the modulation of the specificity of the ClpAP-mediated ATP-dependent protein degradation.</text>
</comment>
<comment type="subunit">
    <text evidence="1">Binds to the N-terminal domain of the chaperone ClpA.</text>
</comment>
<comment type="similarity">
    <text evidence="1">Belongs to the ClpS family.</text>
</comment>
<reference key="1">
    <citation type="journal article" date="2000" name="Nature">
        <title>Complete DNA sequence of a serogroup A strain of Neisseria meningitidis Z2491.</title>
        <authorList>
            <person name="Parkhill J."/>
            <person name="Achtman M."/>
            <person name="James K.D."/>
            <person name="Bentley S.D."/>
            <person name="Churcher C.M."/>
            <person name="Klee S.R."/>
            <person name="Morelli G."/>
            <person name="Basham D."/>
            <person name="Brown D."/>
            <person name="Chillingworth T."/>
            <person name="Davies R.M."/>
            <person name="Davis P."/>
            <person name="Devlin K."/>
            <person name="Feltwell T."/>
            <person name="Hamlin N."/>
            <person name="Holroyd S."/>
            <person name="Jagels K."/>
            <person name="Leather S."/>
            <person name="Moule S."/>
            <person name="Mungall K.L."/>
            <person name="Quail M.A."/>
            <person name="Rajandream M.A."/>
            <person name="Rutherford K.M."/>
            <person name="Simmonds M."/>
            <person name="Skelton J."/>
            <person name="Whitehead S."/>
            <person name="Spratt B.G."/>
            <person name="Barrell B.G."/>
        </authorList>
    </citation>
    <scope>NUCLEOTIDE SEQUENCE [LARGE SCALE GENOMIC DNA]</scope>
    <source>
        <strain>DSM 15465 / Z2491</strain>
    </source>
</reference>